<feature type="chain" id="PRO_0000396447" description="Ubiquitin">
    <location>
        <begin position="1"/>
        <end position="76"/>
    </location>
</feature>
<feature type="chain" id="PRO_0000396448" description="Ubiquitin">
    <location>
        <begin position="77"/>
        <end position="152"/>
    </location>
</feature>
<feature type="chain" id="PRO_0000396449" description="Ubiquitin">
    <location>
        <begin position="153"/>
        <end position="228"/>
    </location>
</feature>
<feature type="chain" id="PRO_0000396450" description="Ubiquitin">
    <location>
        <begin position="229"/>
        <end position="304"/>
    </location>
</feature>
<feature type="chain" id="PRO_0000396451" description="Large ribosomal subunit protein eL40">
    <location>
        <begin position="305"/>
        <end position="356"/>
    </location>
</feature>
<feature type="domain" description="Ubiquitin-like 1" evidence="2">
    <location>
        <begin position="1"/>
        <end position="76"/>
    </location>
</feature>
<feature type="domain" description="Ubiquitin-like 2" evidence="2">
    <location>
        <begin position="77"/>
        <end position="152"/>
    </location>
</feature>
<feature type="domain" description="Ubiquitin-like 3" evidence="2">
    <location>
        <begin position="153"/>
        <end position="228"/>
    </location>
</feature>
<feature type="domain" description="Ubiquitin-like 4" evidence="2">
    <location>
        <begin position="229"/>
        <end position="304"/>
    </location>
</feature>
<feature type="cross-link" description="Glycyl lysine isopeptide (Lys-Gly) (interchain with G-Cter in ubiquitin)" evidence="1">
    <location>
        <position position="48"/>
    </location>
</feature>
<feature type="cross-link" description="Glycyl lysine isopeptide (Gly-Lys) (interchain with K-? in acceptor proteins)" evidence="2">
    <location>
        <position position="76"/>
    </location>
</feature>
<reference key="1">
    <citation type="journal article" date="1988" name="J. Biol. Chem.">
        <title>Ubiquitin genes in trypanosomatidae.</title>
        <authorList>
            <person name="Kirchhoff L.V."/>
            <person name="Kim K.S."/>
            <person name="Engman D.M."/>
            <person name="Donelson J.E."/>
        </authorList>
    </citation>
    <scope>NUCLEOTIDE SEQUENCE [MRNA]</scope>
</reference>
<reference key="2">
    <citation type="journal article" date="1988" name="EMBO J.">
        <title>The genomic organization and transcription of the ubiquitin genes of Trypanosoma cruzi.</title>
        <authorList>
            <person name="Swindle J."/>
            <person name="Ajioka J."/>
            <person name="Eisen H."/>
            <person name="Sanwal B."/>
            <person name="Jacquemot C."/>
            <person name="Browder Z."/>
            <person name="Buck G."/>
        </authorList>
    </citation>
    <scope>NUCLEOTIDE SEQUENCE [GENOMIC DNA] OF 1-78</scope>
    <source>
        <strain>CL</strain>
    </source>
</reference>
<organism>
    <name type="scientific">Trypanosoma cruzi</name>
    <dbReference type="NCBI Taxonomy" id="5693"/>
    <lineage>
        <taxon>Eukaryota</taxon>
        <taxon>Discoba</taxon>
        <taxon>Euglenozoa</taxon>
        <taxon>Kinetoplastea</taxon>
        <taxon>Metakinetoplastina</taxon>
        <taxon>Trypanosomatida</taxon>
        <taxon>Trypanosomatidae</taxon>
        <taxon>Trypanosoma</taxon>
        <taxon>Schizotrypanum</taxon>
    </lineage>
</organism>
<comment type="function">
    <molecule>Ubiquitin</molecule>
    <text evidence="1">Exists either covalently attached to another protein, or free (unanchored). When covalently bound, it is conjugated to target proteins via an isopeptide bond either as a monomer (monoubiquitin), a polymer linked via different Lys residues of the ubiquitin (polyubiquitin chains) or a linear polymer linked via the initiator Met of the ubiquitin (linear polyubiquitin chains). Polyubiquitin chains, when attached to a target protein, have different functions depending on the Lys residue of the ubiquitin that is linked: Lys-48-linked is involved in protein degradation via the proteasome. Linear polymer chains formed via attachment by the initiator Met lead to cell signaling. Ubiquitin is usually conjugated to Lys residues of target proteins, however, in rare cases, conjugation to Cys or Ser residues has been observed. When polyubiquitin is free (unanchored-polyubiquitin), it also has distinct roles, such as in activation of protein kinases, and in signaling (By similarity).</text>
</comment>
<comment type="function">
    <molecule>Large ribosomal subunit protein eL40</molecule>
    <text evidence="1">Component of the 60S subunit of the ribosome.</text>
</comment>
<comment type="subunit">
    <molecule>Large ribosomal subunit protein eL40</molecule>
    <text evidence="1">Part of the 60S ribosomal subunit.</text>
</comment>
<comment type="subcellular location">
    <molecule>Ubiquitin</molecule>
    <subcellularLocation>
        <location evidence="1">Cytoplasm</location>
    </subcellularLocation>
    <subcellularLocation>
        <location evidence="1">Nucleus</location>
    </subcellularLocation>
</comment>
<comment type="subcellular location">
    <molecule>Large ribosomal subunit protein eL40</molecule>
    <subcellularLocation>
        <location evidence="1">Cytoplasm</location>
    </subcellularLocation>
</comment>
<comment type="miscellaneous">
    <text>Ubiquitin is synthesized as a polyubiquitin precursor with 5 or 6 exact head to tail repeats. Some ubiquitin genes contain a single copy of ubiquitin fused to a ribosomal protein. This gene is an exception, since it contains for 4 copies of the ubiquitin fused to the ribosomal protein eL40.</text>
</comment>
<comment type="miscellaneous">
    <text>For a better understanding, features related to ubiquitin are only indicated for the first chain.</text>
</comment>
<comment type="similarity">
    <text evidence="3">In the N-terminal section; belongs to the ubiquitin family.</text>
</comment>
<comment type="similarity">
    <text evidence="3">In the C-terminal section; belongs to the eukaryotic ribosomal protein eL40 family.</text>
</comment>
<accession>P0CH27</accession>
<accession>P08565</accession>
<dbReference type="EMBL" id="J03945">
    <property type="protein sequence ID" value="AAA30271.1"/>
    <property type="molecule type" value="mRNA"/>
</dbReference>
<dbReference type="EMBL" id="X07451">
    <property type="protein sequence ID" value="CAA30334.1"/>
    <property type="molecule type" value="Genomic_DNA"/>
</dbReference>
<dbReference type="PIR" id="A31115">
    <property type="entry name" value="UQUTRC"/>
</dbReference>
<dbReference type="PIR" id="S00510">
    <property type="entry name" value="UQUTC"/>
</dbReference>
<dbReference type="SMR" id="P0CH27"/>
<dbReference type="VEuPathDB" id="TriTrypDB:BCY84_17803"/>
<dbReference type="VEuPathDB" id="TriTrypDB:C3747_46g18"/>
<dbReference type="VEuPathDB" id="TriTrypDB:C4B63_138g30"/>
<dbReference type="VEuPathDB" id="TriTrypDB:ECC02_008813"/>
<dbReference type="VEuPathDB" id="TriTrypDB:TcBrA4_0024880"/>
<dbReference type="VEuPathDB" id="TriTrypDB:TcBrA4_0110030"/>
<dbReference type="VEuPathDB" id="TriTrypDB:TcCL_Unassigned07130"/>
<dbReference type="VEuPathDB" id="TriTrypDB:TcG_06155"/>
<dbReference type="VEuPathDB" id="TriTrypDB:TcYC6_0037170"/>
<dbReference type="GO" id="GO:0005737">
    <property type="term" value="C:cytoplasm"/>
    <property type="evidence" value="ECO:0007669"/>
    <property type="project" value="UniProtKB-SubCell"/>
</dbReference>
<dbReference type="GO" id="GO:0005634">
    <property type="term" value="C:nucleus"/>
    <property type="evidence" value="ECO:0007669"/>
    <property type="project" value="UniProtKB-SubCell"/>
</dbReference>
<dbReference type="GO" id="GO:1990904">
    <property type="term" value="C:ribonucleoprotein complex"/>
    <property type="evidence" value="ECO:0007669"/>
    <property type="project" value="UniProtKB-KW"/>
</dbReference>
<dbReference type="GO" id="GO:0005840">
    <property type="term" value="C:ribosome"/>
    <property type="evidence" value="ECO:0007669"/>
    <property type="project" value="UniProtKB-KW"/>
</dbReference>
<dbReference type="GO" id="GO:0003735">
    <property type="term" value="F:structural constituent of ribosome"/>
    <property type="evidence" value="ECO:0007669"/>
    <property type="project" value="InterPro"/>
</dbReference>
<dbReference type="GO" id="GO:0006412">
    <property type="term" value="P:translation"/>
    <property type="evidence" value="ECO:0007669"/>
    <property type="project" value="InterPro"/>
</dbReference>
<dbReference type="CDD" id="cd01803">
    <property type="entry name" value="Ubl_ubiquitin"/>
    <property type="match status" value="4"/>
</dbReference>
<dbReference type="FunFam" id="3.10.20.90:FF:000016">
    <property type="entry name" value="Polyubiquitin 3"/>
    <property type="match status" value="2"/>
</dbReference>
<dbReference type="FunFam" id="3.10.20.90:FF:000014">
    <property type="entry name" value="Ubiquitin-60S ribosomal L40 fusion"/>
    <property type="match status" value="2"/>
</dbReference>
<dbReference type="FunFam" id="4.10.1060.50:FF:000001">
    <property type="entry name" value="ubiquitin-60S ribosomal protein L40"/>
    <property type="match status" value="1"/>
</dbReference>
<dbReference type="Gene3D" id="4.10.1060.50">
    <property type="match status" value="1"/>
</dbReference>
<dbReference type="Gene3D" id="3.10.20.90">
    <property type="entry name" value="Phosphatidylinositol 3-kinase Catalytic Subunit, Chain A, domain 1"/>
    <property type="match status" value="4"/>
</dbReference>
<dbReference type="InterPro" id="IPR001975">
    <property type="entry name" value="Ribosomal_eL40_dom"/>
</dbReference>
<dbReference type="InterPro" id="IPR038587">
    <property type="entry name" value="Ribosomal_eL40_sf"/>
</dbReference>
<dbReference type="InterPro" id="IPR011332">
    <property type="entry name" value="Ribosomal_zn-bd"/>
</dbReference>
<dbReference type="InterPro" id="IPR000626">
    <property type="entry name" value="Ubiquitin-like_dom"/>
</dbReference>
<dbReference type="InterPro" id="IPR029071">
    <property type="entry name" value="Ubiquitin-like_domsf"/>
</dbReference>
<dbReference type="InterPro" id="IPR019954">
    <property type="entry name" value="Ubiquitin_CS"/>
</dbReference>
<dbReference type="InterPro" id="IPR019956">
    <property type="entry name" value="Ubiquitin_dom"/>
</dbReference>
<dbReference type="InterPro" id="IPR050158">
    <property type="entry name" value="Ubiquitin_ubiquitin-like"/>
</dbReference>
<dbReference type="PANTHER" id="PTHR10666">
    <property type="entry name" value="UBIQUITIN"/>
    <property type="match status" value="1"/>
</dbReference>
<dbReference type="Pfam" id="PF01020">
    <property type="entry name" value="Ribosomal_L40e"/>
    <property type="match status" value="1"/>
</dbReference>
<dbReference type="Pfam" id="PF00240">
    <property type="entry name" value="ubiquitin"/>
    <property type="match status" value="4"/>
</dbReference>
<dbReference type="PRINTS" id="PR00348">
    <property type="entry name" value="UBIQUITIN"/>
</dbReference>
<dbReference type="SMART" id="SM01377">
    <property type="entry name" value="Ribosomal_L40e"/>
    <property type="match status" value="1"/>
</dbReference>
<dbReference type="SMART" id="SM00213">
    <property type="entry name" value="UBQ"/>
    <property type="match status" value="4"/>
</dbReference>
<dbReference type="SUPFAM" id="SSF54236">
    <property type="entry name" value="Ubiquitin-like"/>
    <property type="match status" value="4"/>
</dbReference>
<dbReference type="SUPFAM" id="SSF57829">
    <property type="entry name" value="Zn-binding ribosomal proteins"/>
    <property type="match status" value="1"/>
</dbReference>
<dbReference type="PROSITE" id="PS00299">
    <property type="entry name" value="UBIQUITIN_1"/>
    <property type="match status" value="4"/>
</dbReference>
<dbReference type="PROSITE" id="PS50053">
    <property type="entry name" value="UBIQUITIN_2"/>
    <property type="match status" value="4"/>
</dbReference>
<name>RL402_TRYCR</name>
<protein>
    <recommendedName>
        <fullName evidence="3">Ubiquitin-ribosomal protein eL40 fusion protein</fullName>
    </recommendedName>
    <component>
        <recommendedName>
            <fullName>Ubiquitin</fullName>
        </recommendedName>
    </component>
    <component>
        <recommendedName>
            <fullName evidence="3">Large ribosomal subunit protein eL40</fullName>
        </recommendedName>
        <alternativeName>
            <fullName>60S ribosomal protein L40</fullName>
        </alternativeName>
    </component>
</protein>
<keyword id="KW-0963">Cytoplasm</keyword>
<keyword id="KW-1017">Isopeptide bond</keyword>
<keyword id="KW-0539">Nucleus</keyword>
<keyword id="KW-0677">Repeat</keyword>
<keyword id="KW-0687">Ribonucleoprotein</keyword>
<keyword id="KW-0689">Ribosomal protein</keyword>
<keyword id="KW-0832">Ubl conjugation</keyword>
<proteinExistence type="evidence at transcript level"/>
<evidence type="ECO:0000250" key="1"/>
<evidence type="ECO:0000255" key="2">
    <source>
        <dbReference type="PROSITE-ProRule" id="PRU00214"/>
    </source>
</evidence>
<evidence type="ECO:0000305" key="3"/>
<sequence>MQIFVKTLTGKTIALEVESSDTIENVKAKIQDKEGIPPDQQRLIFAGKQLEDGRTLADYNIQKESTLHLVLRLRGGMQIFVKTLTGKTIALEVESSDTIENVKAKIQDKEGIPPDQQRLIFAGKQLEDGRTLADYNIQKESTLHLVLRLRGGMQIFVKTLTGKTIALEVESSDTIENVKAKIQDKEGIPPDQQRLIFAGKQLEDGRTLADYNIQKESTLHLVLRLRGGMQIFVKTLTGKTIALEVESSDTIENVKAKIQDKEGIPPDQQRLIFAGKQLEDGRTLADYNIQKESTLHLVLRLRGGVMEPTLEALAKKYNWEKKVCRRCYARLPVRASNCRKKACGHCSNLRMKKKLR</sequence>